<sequence length="957" mass="99759">MPGIIYILCSILLIESQYYVASENAEIRSSCRTAPNDLVFILDGSWSVGPENFEILKKWVVNITSNFNIGPKFTQVGVVQYSDYPILEIPLGSYESIDDLSRRTQSIQYLGGNTQTGNAIQFAIDNLFARSLRPLTKIAIVLTDGKSQDDVKHIAEEARKNKITLFAIGVGSEIEESELRAIANKPSSTYVFYVEDYIAISRIREIMKQKLCEESVCPTRIPVAARDEKGFDILLGLGINKKKAKRVEGSRPRNKAYEITSQIDLTEFTGNVFPEGLPPSYVFISTLRFKIKKKWDLWRILALDGTIQTAVSLNGEEKTLSFTTTNEENGTQAITFTTPGVKKLFDEEWHQIRLLVTEEDITLYVDDQEIETRKLLPVIGIYISGQTQIGKYPAREESVQFTLQKLRIYCDPEQNKRETACEIPGTNGECLNGPSDVGGTPAPCICPPGEKGDPGPKGDSGQPGNPGSPGQPGPDGKHGFQGTSGSPGIPGSPGVQGPRGFAGLKGNTGQDGEKGDRGMPGFPGLHGQPGIKGEMGPKGDKGDIGIDGKKGTKGDKGGNGATGKPGRHGEPGSYGKDGIPGYPGQKGEEGKPGPPGMEGLRGLPGIPGIPGNDGANGLKGETGLSGEPGARGPTGTPGISGPEGISGPQGPVGPKGNKGETGPPGKASPAGMKGEKGEMGIPGQQGYTGIPGLMGPKGDKGNLGERGMQGHKGEHGSSGMPGLKGEHGVTGSKGEKGEIGEHGHRGITGPRGEPGNMGLIGAPGPRGMSGERGTQGLPGPKGQQGKEQSEAFIRQICLDVLKAQLPSLIQNDIRQNCNQCKTQEGSPGLPGPPGPVGPEGTRGHPGLPGRNGFSGLVGQPGLPGIPGTKGLPGKPGAKGNKGDIEPGPQGSPGVPGPAGLPGVGKDGRTGPLGPPGREGDRGPPGTQGPPGDAGICDPSLCYGAVMRRDPFRKGPNY</sequence>
<feature type="signal peptide" evidence="2">
    <location>
        <begin position="1"/>
        <end position="16"/>
    </location>
</feature>
<feature type="chain" id="PRO_0000317614" description="Collagen alpha-1(XXI) chain">
    <location>
        <begin position="17"/>
        <end position="957"/>
    </location>
</feature>
<feature type="domain" description="VWFA" evidence="3">
    <location>
        <begin position="37"/>
        <end position="211"/>
    </location>
</feature>
<feature type="domain" description="Laminin G-like">
    <location>
        <begin position="230"/>
        <end position="412"/>
    </location>
</feature>
<feature type="domain" description="Collagen-like 1">
    <location>
        <begin position="448"/>
        <end position="501"/>
    </location>
</feature>
<feature type="domain" description="Collagen-like 2">
    <location>
        <begin position="502"/>
        <end position="543"/>
    </location>
</feature>
<feature type="domain" description="Collagen-like 3">
    <location>
        <begin position="544"/>
        <end position="591"/>
    </location>
</feature>
<feature type="domain" description="Collagen-like 4">
    <location>
        <begin position="592"/>
        <end position="642"/>
    </location>
</feature>
<feature type="domain" description="Collagen-like 5">
    <location>
        <begin position="643"/>
        <end position="684"/>
    </location>
</feature>
<feature type="domain" description="Collagen-like 6">
    <location>
        <begin position="685"/>
        <end position="741"/>
    </location>
</feature>
<feature type="domain" description="Collagen-like 7">
    <location>
        <begin position="742"/>
        <end position="786"/>
    </location>
</feature>
<feature type="domain" description="Collagen-like 8">
    <location>
        <begin position="825"/>
        <end position="882"/>
    </location>
</feature>
<feature type="region of interest" description="Disordered" evidence="4">
    <location>
        <begin position="441"/>
        <end position="788"/>
    </location>
</feature>
<feature type="region of interest" description="Disordered" evidence="4">
    <location>
        <begin position="820"/>
        <end position="935"/>
    </location>
</feature>
<feature type="compositionally biased region" description="Low complexity" evidence="4">
    <location>
        <begin position="483"/>
        <end position="498"/>
    </location>
</feature>
<feature type="compositionally biased region" description="Basic and acidic residues" evidence="4">
    <location>
        <begin position="535"/>
        <end position="556"/>
    </location>
</feature>
<feature type="compositionally biased region" description="Low complexity" evidence="4">
    <location>
        <begin position="597"/>
        <end position="616"/>
    </location>
</feature>
<feature type="compositionally biased region" description="Low complexity" evidence="4">
    <location>
        <begin position="633"/>
        <end position="649"/>
    </location>
</feature>
<feature type="compositionally biased region" description="Basic and acidic residues" evidence="4">
    <location>
        <begin position="733"/>
        <end position="744"/>
    </location>
</feature>
<feature type="compositionally biased region" description="Low complexity" evidence="4">
    <location>
        <begin position="775"/>
        <end position="786"/>
    </location>
</feature>
<protein>
    <recommendedName>
        <fullName>Collagen alpha-1(XXI) chain</fullName>
    </recommendedName>
</protein>
<keyword id="KW-0176">Collagen</keyword>
<keyword id="KW-0963">Cytoplasm</keyword>
<keyword id="KW-0272">Extracellular matrix</keyword>
<keyword id="KW-1185">Reference proteome</keyword>
<keyword id="KW-0677">Repeat</keyword>
<keyword id="KW-0964">Secreted</keyword>
<keyword id="KW-0732">Signal</keyword>
<evidence type="ECO:0000250" key="1"/>
<evidence type="ECO:0000255" key="2"/>
<evidence type="ECO:0000255" key="3">
    <source>
        <dbReference type="PROSITE-ProRule" id="PRU00219"/>
    </source>
</evidence>
<evidence type="ECO:0000256" key="4">
    <source>
        <dbReference type="SAM" id="MobiDB-lite"/>
    </source>
</evidence>
<evidence type="ECO:0000305" key="5"/>
<proteinExistence type="evidence at transcript level"/>
<gene>
    <name type="primary">col21a1</name>
</gene>
<dbReference type="EMBL" id="BC082384">
    <property type="protein sequence ID" value="AAH82384.1"/>
    <property type="molecule type" value="mRNA"/>
</dbReference>
<dbReference type="RefSeq" id="NP_001087858.1">
    <property type="nucleotide sequence ID" value="NM_001094389.1"/>
</dbReference>
<dbReference type="SMR" id="Q641F3"/>
<dbReference type="DNASU" id="447719"/>
<dbReference type="GeneID" id="447719"/>
<dbReference type="KEGG" id="xla:447719"/>
<dbReference type="AGR" id="Xenbase:XB-GENE-952330"/>
<dbReference type="CTD" id="447719"/>
<dbReference type="Xenbase" id="XB-GENE-952330">
    <property type="gene designation" value="col21a1.L"/>
</dbReference>
<dbReference type="OMA" id="CAHCQLQ"/>
<dbReference type="OrthoDB" id="10256829at2759"/>
<dbReference type="Proteomes" id="UP000186698">
    <property type="component" value="Chromosome 5L"/>
</dbReference>
<dbReference type="Bgee" id="447719">
    <property type="expression patterns" value="Expressed in pancreas and 5 other cell types or tissues"/>
</dbReference>
<dbReference type="GO" id="GO:0005581">
    <property type="term" value="C:collagen trimer"/>
    <property type="evidence" value="ECO:0007669"/>
    <property type="project" value="UniProtKB-KW"/>
</dbReference>
<dbReference type="GO" id="GO:0062023">
    <property type="term" value="C:collagen-containing extracellular matrix"/>
    <property type="evidence" value="ECO:0000318"/>
    <property type="project" value="GO_Central"/>
</dbReference>
<dbReference type="GO" id="GO:0005737">
    <property type="term" value="C:cytoplasm"/>
    <property type="evidence" value="ECO:0007669"/>
    <property type="project" value="UniProtKB-SubCell"/>
</dbReference>
<dbReference type="GO" id="GO:0005576">
    <property type="term" value="C:extracellular region"/>
    <property type="evidence" value="ECO:0007669"/>
    <property type="project" value="UniProtKB-KW"/>
</dbReference>
<dbReference type="FunFam" id="3.40.50.410:FF:000041">
    <property type="entry name" value="Collagen alpha-1(XXI) chain isoform X1"/>
    <property type="match status" value="1"/>
</dbReference>
<dbReference type="FunFam" id="2.60.120.200:FF:000068">
    <property type="entry name" value="collagen alpha-1(XXI) chain isoform X1"/>
    <property type="match status" value="1"/>
</dbReference>
<dbReference type="Gene3D" id="2.60.120.200">
    <property type="match status" value="1"/>
</dbReference>
<dbReference type="Gene3D" id="3.40.50.410">
    <property type="entry name" value="von Willebrand factor, type A domain"/>
    <property type="match status" value="1"/>
</dbReference>
<dbReference type="InterPro" id="IPR008160">
    <property type="entry name" value="Collagen"/>
</dbReference>
<dbReference type="InterPro" id="IPR050938">
    <property type="entry name" value="Collagen_Structural_Proteins"/>
</dbReference>
<dbReference type="InterPro" id="IPR013320">
    <property type="entry name" value="ConA-like_dom_sf"/>
</dbReference>
<dbReference type="InterPro" id="IPR048287">
    <property type="entry name" value="TSPN-like_N"/>
</dbReference>
<dbReference type="InterPro" id="IPR002035">
    <property type="entry name" value="VWF_A"/>
</dbReference>
<dbReference type="InterPro" id="IPR036465">
    <property type="entry name" value="vWFA_dom_sf"/>
</dbReference>
<dbReference type="PANTHER" id="PTHR37456:SF6">
    <property type="entry name" value="COLLAGEN ALPHA-1(XXIII) CHAIN-LIKE ISOFORM X2"/>
    <property type="match status" value="1"/>
</dbReference>
<dbReference type="PANTHER" id="PTHR37456">
    <property type="entry name" value="SI:CH211-266K2.1"/>
    <property type="match status" value="1"/>
</dbReference>
<dbReference type="Pfam" id="PF01391">
    <property type="entry name" value="Collagen"/>
    <property type="match status" value="8"/>
</dbReference>
<dbReference type="Pfam" id="PF00092">
    <property type="entry name" value="VWA"/>
    <property type="match status" value="1"/>
</dbReference>
<dbReference type="PRINTS" id="PR00453">
    <property type="entry name" value="VWFADOMAIN"/>
</dbReference>
<dbReference type="SMART" id="SM00210">
    <property type="entry name" value="TSPN"/>
    <property type="match status" value="1"/>
</dbReference>
<dbReference type="SMART" id="SM00327">
    <property type="entry name" value="VWA"/>
    <property type="match status" value="1"/>
</dbReference>
<dbReference type="SUPFAM" id="SSF49899">
    <property type="entry name" value="Concanavalin A-like lectins/glucanases"/>
    <property type="match status" value="1"/>
</dbReference>
<dbReference type="SUPFAM" id="SSF53300">
    <property type="entry name" value="vWA-like"/>
    <property type="match status" value="1"/>
</dbReference>
<dbReference type="PROSITE" id="PS50234">
    <property type="entry name" value="VWFA"/>
    <property type="match status" value="1"/>
</dbReference>
<organism>
    <name type="scientific">Xenopus laevis</name>
    <name type="common">African clawed frog</name>
    <dbReference type="NCBI Taxonomy" id="8355"/>
    <lineage>
        <taxon>Eukaryota</taxon>
        <taxon>Metazoa</taxon>
        <taxon>Chordata</taxon>
        <taxon>Craniata</taxon>
        <taxon>Vertebrata</taxon>
        <taxon>Euteleostomi</taxon>
        <taxon>Amphibia</taxon>
        <taxon>Batrachia</taxon>
        <taxon>Anura</taxon>
        <taxon>Pipoidea</taxon>
        <taxon>Pipidae</taxon>
        <taxon>Xenopodinae</taxon>
        <taxon>Xenopus</taxon>
        <taxon>Xenopus</taxon>
    </lineage>
</organism>
<comment type="subcellular location">
    <subcellularLocation>
        <location>Secreted</location>
        <location>Extracellular space</location>
        <location>Extracellular matrix</location>
    </subcellularLocation>
    <subcellularLocation>
        <location evidence="1">Cytoplasm</location>
    </subcellularLocation>
</comment>
<comment type="similarity">
    <text evidence="5">Belongs to the fibril-associated collagens with interrupted helices (FACIT) family.</text>
</comment>
<reference key="1">
    <citation type="submission" date="2004-09" db="EMBL/GenBank/DDBJ databases">
        <authorList>
            <consortium name="NIH - Xenopus Gene Collection (XGC) project"/>
        </authorList>
    </citation>
    <scope>NUCLEOTIDE SEQUENCE [LARGE SCALE MRNA]</scope>
    <source>
        <tissue>Kidney</tissue>
    </source>
</reference>
<accession>Q641F3</accession>
<name>COLA1_XENLA</name>